<name>PUR7_BACHK</name>
<reference key="1">
    <citation type="journal article" date="2006" name="J. Bacteriol.">
        <title>Pathogenomic sequence analysis of Bacillus cereus and Bacillus thuringiensis isolates closely related to Bacillus anthracis.</title>
        <authorList>
            <person name="Han C.S."/>
            <person name="Xie G."/>
            <person name="Challacombe J.F."/>
            <person name="Altherr M.R."/>
            <person name="Bhotika S.S."/>
            <person name="Bruce D."/>
            <person name="Campbell C.S."/>
            <person name="Campbell M.L."/>
            <person name="Chen J."/>
            <person name="Chertkov O."/>
            <person name="Cleland C."/>
            <person name="Dimitrijevic M."/>
            <person name="Doggett N.A."/>
            <person name="Fawcett J.J."/>
            <person name="Glavina T."/>
            <person name="Goodwin L.A."/>
            <person name="Hill K.K."/>
            <person name="Hitchcock P."/>
            <person name="Jackson P.J."/>
            <person name="Keim P."/>
            <person name="Kewalramani A.R."/>
            <person name="Longmire J."/>
            <person name="Lucas S."/>
            <person name="Malfatti S."/>
            <person name="McMurry K."/>
            <person name="Meincke L.J."/>
            <person name="Misra M."/>
            <person name="Moseman B.L."/>
            <person name="Mundt M."/>
            <person name="Munk A.C."/>
            <person name="Okinaka R.T."/>
            <person name="Parson-Quintana B."/>
            <person name="Reilly L.P."/>
            <person name="Richardson P."/>
            <person name="Robinson D.L."/>
            <person name="Rubin E."/>
            <person name="Saunders E."/>
            <person name="Tapia R."/>
            <person name="Tesmer J.G."/>
            <person name="Thayer N."/>
            <person name="Thompson L.S."/>
            <person name="Tice H."/>
            <person name="Ticknor L.O."/>
            <person name="Wills P.L."/>
            <person name="Brettin T.S."/>
            <person name="Gilna P."/>
        </authorList>
    </citation>
    <scope>NUCLEOTIDE SEQUENCE [LARGE SCALE GENOMIC DNA]</scope>
    <source>
        <strain>97-27</strain>
    </source>
</reference>
<accession>Q6HPA7</accession>
<proteinExistence type="inferred from homology"/>
<evidence type="ECO:0000255" key="1">
    <source>
        <dbReference type="HAMAP-Rule" id="MF_00137"/>
    </source>
</evidence>
<gene>
    <name evidence="1" type="primary">purC</name>
    <name type="ordered locus">BT9727_0263</name>
</gene>
<feature type="chain" id="PRO_1000018669" description="Phosphoribosylaminoimidazole-succinocarboxamide synthase">
    <location>
        <begin position="1"/>
        <end position="239"/>
    </location>
</feature>
<keyword id="KW-0067">ATP-binding</keyword>
<keyword id="KW-0436">Ligase</keyword>
<keyword id="KW-0547">Nucleotide-binding</keyword>
<keyword id="KW-0658">Purine biosynthesis</keyword>
<organism>
    <name type="scientific">Bacillus thuringiensis subsp. konkukian (strain 97-27)</name>
    <dbReference type="NCBI Taxonomy" id="281309"/>
    <lineage>
        <taxon>Bacteria</taxon>
        <taxon>Bacillati</taxon>
        <taxon>Bacillota</taxon>
        <taxon>Bacilli</taxon>
        <taxon>Bacillales</taxon>
        <taxon>Bacillaceae</taxon>
        <taxon>Bacillus</taxon>
        <taxon>Bacillus cereus group</taxon>
    </lineage>
</organism>
<protein>
    <recommendedName>
        <fullName evidence="1">Phosphoribosylaminoimidazole-succinocarboxamide synthase</fullName>
        <ecNumber evidence="1">6.3.2.6</ecNumber>
    </recommendedName>
    <alternativeName>
        <fullName evidence="1">SAICAR synthetase</fullName>
    </alternativeName>
</protein>
<sequence>MQKLELLYEGKAKRIYRTESADMVWVEYKDSATAFNGEKKETITGKGRLNNEITTLLFRKLQEVGIKTHFVEKLSETEQLVKKVSIIPLEVVTRNVLAGSLSKRLGMEEGTVLAEPIVEFYFKDDDLGDPLVTEDHIRVLNVASPEQVSVLRDMALQINQVLIDHFASCRVRLVDFKLEFGVTDEGAIILADEISPDTCRLWDETSNEKFDKDVFRRDLGNLTDAYEEILKRLGGISHV</sequence>
<dbReference type="EC" id="6.3.2.6" evidence="1"/>
<dbReference type="EMBL" id="AE017355">
    <property type="protein sequence ID" value="AAT61299.1"/>
    <property type="molecule type" value="Genomic_DNA"/>
</dbReference>
<dbReference type="RefSeq" id="WP_001170550.1">
    <property type="nucleotide sequence ID" value="NC_005957.1"/>
</dbReference>
<dbReference type="RefSeq" id="YP_034613.1">
    <property type="nucleotide sequence ID" value="NC_005957.1"/>
</dbReference>
<dbReference type="SMR" id="Q6HPA7"/>
<dbReference type="KEGG" id="btk:BT9727_0263"/>
<dbReference type="PATRIC" id="fig|281309.8.peg.280"/>
<dbReference type="HOGENOM" id="CLU_061495_2_0_9"/>
<dbReference type="UniPathway" id="UPA00074">
    <property type="reaction ID" value="UER00131"/>
</dbReference>
<dbReference type="Proteomes" id="UP000001301">
    <property type="component" value="Chromosome"/>
</dbReference>
<dbReference type="GO" id="GO:0005524">
    <property type="term" value="F:ATP binding"/>
    <property type="evidence" value="ECO:0007669"/>
    <property type="project" value="UniProtKB-KW"/>
</dbReference>
<dbReference type="GO" id="GO:0004639">
    <property type="term" value="F:phosphoribosylaminoimidazolesuccinocarboxamide synthase activity"/>
    <property type="evidence" value="ECO:0007669"/>
    <property type="project" value="UniProtKB-UniRule"/>
</dbReference>
<dbReference type="GO" id="GO:0006189">
    <property type="term" value="P:'de novo' IMP biosynthetic process"/>
    <property type="evidence" value="ECO:0007669"/>
    <property type="project" value="UniProtKB-UniRule"/>
</dbReference>
<dbReference type="GO" id="GO:0009236">
    <property type="term" value="P:cobalamin biosynthetic process"/>
    <property type="evidence" value="ECO:0007669"/>
    <property type="project" value="InterPro"/>
</dbReference>
<dbReference type="CDD" id="cd01415">
    <property type="entry name" value="SAICAR_synt_PurC"/>
    <property type="match status" value="1"/>
</dbReference>
<dbReference type="FunFam" id="3.30.200.20:FF:000189">
    <property type="entry name" value="Phosphoribosylaminoimidazole-succinocarboxamide synthase"/>
    <property type="match status" value="1"/>
</dbReference>
<dbReference type="FunFam" id="3.30.470.20:FF:000006">
    <property type="entry name" value="Phosphoribosylaminoimidazole-succinocarboxamide synthase"/>
    <property type="match status" value="1"/>
</dbReference>
<dbReference type="Gene3D" id="3.30.470.20">
    <property type="entry name" value="ATP-grasp fold, B domain"/>
    <property type="match status" value="1"/>
</dbReference>
<dbReference type="Gene3D" id="3.30.200.20">
    <property type="entry name" value="Phosphorylase Kinase, domain 1"/>
    <property type="match status" value="1"/>
</dbReference>
<dbReference type="HAMAP" id="MF_00137">
    <property type="entry name" value="SAICAR_synth"/>
    <property type="match status" value="1"/>
</dbReference>
<dbReference type="InterPro" id="IPR028923">
    <property type="entry name" value="SAICAR_synt/ADE2_N"/>
</dbReference>
<dbReference type="InterPro" id="IPR033934">
    <property type="entry name" value="SAICAR_synt_PurC"/>
</dbReference>
<dbReference type="InterPro" id="IPR001636">
    <property type="entry name" value="SAICAR_synth"/>
</dbReference>
<dbReference type="InterPro" id="IPR050089">
    <property type="entry name" value="SAICAR_synthetase"/>
</dbReference>
<dbReference type="InterPro" id="IPR018236">
    <property type="entry name" value="SAICAR_synthetase_CS"/>
</dbReference>
<dbReference type="NCBIfam" id="TIGR00081">
    <property type="entry name" value="purC"/>
    <property type="match status" value="1"/>
</dbReference>
<dbReference type="PANTHER" id="PTHR43599">
    <property type="entry name" value="MULTIFUNCTIONAL PROTEIN ADE2"/>
    <property type="match status" value="1"/>
</dbReference>
<dbReference type="PANTHER" id="PTHR43599:SF3">
    <property type="entry name" value="SI:DKEY-6E2.2"/>
    <property type="match status" value="1"/>
</dbReference>
<dbReference type="Pfam" id="PF01259">
    <property type="entry name" value="SAICAR_synt"/>
    <property type="match status" value="1"/>
</dbReference>
<dbReference type="SUPFAM" id="SSF56104">
    <property type="entry name" value="SAICAR synthase-like"/>
    <property type="match status" value="1"/>
</dbReference>
<dbReference type="PROSITE" id="PS01057">
    <property type="entry name" value="SAICAR_SYNTHETASE_1"/>
    <property type="match status" value="1"/>
</dbReference>
<dbReference type="PROSITE" id="PS01058">
    <property type="entry name" value="SAICAR_SYNTHETASE_2"/>
    <property type="match status" value="1"/>
</dbReference>
<comment type="catalytic activity">
    <reaction evidence="1">
        <text>5-amino-1-(5-phospho-D-ribosyl)imidazole-4-carboxylate + L-aspartate + ATP = (2S)-2-[5-amino-1-(5-phospho-beta-D-ribosyl)imidazole-4-carboxamido]succinate + ADP + phosphate + 2 H(+)</text>
        <dbReference type="Rhea" id="RHEA:22628"/>
        <dbReference type="ChEBI" id="CHEBI:15378"/>
        <dbReference type="ChEBI" id="CHEBI:29991"/>
        <dbReference type="ChEBI" id="CHEBI:30616"/>
        <dbReference type="ChEBI" id="CHEBI:43474"/>
        <dbReference type="ChEBI" id="CHEBI:58443"/>
        <dbReference type="ChEBI" id="CHEBI:77657"/>
        <dbReference type="ChEBI" id="CHEBI:456216"/>
        <dbReference type="EC" id="6.3.2.6"/>
    </reaction>
</comment>
<comment type="pathway">
    <text evidence="1">Purine metabolism; IMP biosynthesis via de novo pathway; 5-amino-1-(5-phospho-D-ribosyl)imidazole-4-carboxamide from 5-amino-1-(5-phospho-D-ribosyl)imidazole-4-carboxylate: step 1/2.</text>
</comment>
<comment type="similarity">
    <text evidence="1">Belongs to the SAICAR synthetase family.</text>
</comment>